<name>COQ4_BOMMO</name>
<evidence type="ECO:0000255" key="1">
    <source>
        <dbReference type="HAMAP-Rule" id="MF_03111"/>
    </source>
</evidence>
<comment type="function">
    <text evidence="1">Lyase that catalyzes the C1-decarboxylation of 4-hydroxy-3-methoxy-5-(all-trans-polyprenyl)benzoic acid into 2-methoxy-6-(all-trans-polyprenyl)phenol during ubiquinone biosynthesis.</text>
</comment>
<comment type="catalytic activity">
    <reaction evidence="1">
        <text>a 4-hydroxy-3-methoxy-5-(all-trans-polyprenyl)benzoate + H(+) = a 2-methoxy-6-(all-trans-polyprenyl)phenol + CO2</text>
        <dbReference type="Rhea" id="RHEA:81179"/>
        <dbReference type="Rhea" id="RHEA-COMP:9551"/>
        <dbReference type="Rhea" id="RHEA-COMP:10931"/>
        <dbReference type="ChEBI" id="CHEBI:15378"/>
        <dbReference type="ChEBI" id="CHEBI:16526"/>
        <dbReference type="ChEBI" id="CHEBI:62731"/>
        <dbReference type="ChEBI" id="CHEBI:84443"/>
        <dbReference type="EC" id="4.1.1.130"/>
    </reaction>
</comment>
<comment type="cofactor">
    <cofactor evidence="1">
        <name>Zn(2+)</name>
        <dbReference type="ChEBI" id="CHEBI:29105"/>
    </cofactor>
</comment>
<comment type="pathway">
    <text evidence="1">Cofactor biosynthesis; ubiquinone biosynthesis.</text>
</comment>
<comment type="subunit">
    <text evidence="1">Component of a multi-subunit COQ enzyme complex.</text>
</comment>
<comment type="subcellular location">
    <subcellularLocation>
        <location evidence="1">Mitochondrion inner membrane</location>
        <topology evidence="1">Peripheral membrane protein</topology>
        <orientation evidence="1">Matrix side</orientation>
    </subcellularLocation>
</comment>
<comment type="miscellaneous">
    <text evidence="1">This protein may be expected to contain an N-terminal transit peptide but none has been predicted.</text>
</comment>
<comment type="similarity">
    <text evidence="1">Belongs to the COQ4 family.</text>
</comment>
<protein>
    <recommendedName>
        <fullName evidence="1">Ubiquinone biosynthesis protein COQ4 homolog, mitochondrial</fullName>
    </recommendedName>
    <alternativeName>
        <fullName>4-hydroxy-3-methoxy-5-polyprenylbenzoate decarboxylase</fullName>
        <ecNumber evidence="1">4.1.1.130</ecNumber>
    </alternativeName>
    <alternativeName>
        <fullName evidence="1">Coenzyme Q biosynthesis protein 4 homolog</fullName>
    </alternativeName>
</protein>
<keyword id="KW-0456">Lyase</keyword>
<keyword id="KW-0472">Membrane</keyword>
<keyword id="KW-0479">Metal-binding</keyword>
<keyword id="KW-0496">Mitochondrion</keyword>
<keyword id="KW-0999">Mitochondrion inner membrane</keyword>
<keyword id="KW-1185">Reference proteome</keyword>
<keyword id="KW-0831">Ubiquinone biosynthesis</keyword>
<keyword id="KW-0862">Zinc</keyword>
<dbReference type="EC" id="4.1.1.130" evidence="1"/>
<dbReference type="EMBL" id="DQ443301">
    <property type="protein sequence ID" value="ABF51390.1"/>
    <property type="molecule type" value="mRNA"/>
</dbReference>
<dbReference type="RefSeq" id="NP_001040440.1">
    <property type="nucleotide sequence ID" value="NM_001046975.1"/>
</dbReference>
<dbReference type="SMR" id="Q1HPV1"/>
<dbReference type="FunCoup" id="Q1HPV1">
    <property type="interactions" value="611"/>
</dbReference>
<dbReference type="STRING" id="7091.Q1HPV1"/>
<dbReference type="EnsemblMetazoa" id="NM_001046975.1">
    <property type="protein sequence ID" value="NP_001040440.1"/>
    <property type="gene ID" value="LOC732978"/>
</dbReference>
<dbReference type="GeneID" id="732978"/>
<dbReference type="KEGG" id="bmor:732978"/>
<dbReference type="InParanoid" id="Q1HPV1"/>
<dbReference type="UniPathway" id="UPA00232"/>
<dbReference type="Proteomes" id="UP000005204">
    <property type="component" value="Unassembled WGS sequence"/>
</dbReference>
<dbReference type="GO" id="GO:0031314">
    <property type="term" value="C:extrinsic component of mitochondrial inner membrane"/>
    <property type="evidence" value="ECO:0007669"/>
    <property type="project" value="UniProtKB-UniRule"/>
</dbReference>
<dbReference type="GO" id="GO:0006744">
    <property type="term" value="P:ubiquinone biosynthetic process"/>
    <property type="evidence" value="ECO:0007669"/>
    <property type="project" value="UniProtKB-UniRule"/>
</dbReference>
<dbReference type="HAMAP" id="MF_03111">
    <property type="entry name" value="Coq4"/>
    <property type="match status" value="1"/>
</dbReference>
<dbReference type="InterPro" id="IPR007715">
    <property type="entry name" value="Coq4"/>
</dbReference>
<dbReference type="InterPro" id="IPR027540">
    <property type="entry name" value="Coq4_euk"/>
</dbReference>
<dbReference type="PANTHER" id="PTHR12922">
    <property type="entry name" value="UBIQUINONE BIOSYNTHESIS PROTEIN"/>
    <property type="match status" value="1"/>
</dbReference>
<dbReference type="PANTHER" id="PTHR12922:SF7">
    <property type="entry name" value="UBIQUINONE BIOSYNTHESIS PROTEIN COQ4 HOMOLOG, MITOCHONDRIAL"/>
    <property type="match status" value="1"/>
</dbReference>
<dbReference type="Pfam" id="PF05019">
    <property type="entry name" value="Coq4"/>
    <property type="match status" value="1"/>
</dbReference>
<feature type="chain" id="PRO_0000388058" description="Ubiquinone biosynthesis protein COQ4 homolog, mitochondrial">
    <location>
        <begin position="1"/>
        <end position="259"/>
    </location>
</feature>
<feature type="binding site" evidence="1">
    <location>
        <position position="162"/>
    </location>
    <ligand>
        <name>Zn(2+)</name>
        <dbReference type="ChEBI" id="CHEBI:29105"/>
    </ligand>
</feature>
<feature type="binding site" evidence="1">
    <location>
        <position position="163"/>
    </location>
    <ligand>
        <name>Zn(2+)</name>
        <dbReference type="ChEBI" id="CHEBI:29105"/>
    </ligand>
</feature>
<feature type="binding site" evidence="1">
    <location>
        <position position="166"/>
    </location>
    <ligand>
        <name>Zn(2+)</name>
        <dbReference type="ChEBI" id="CHEBI:29105"/>
    </ligand>
</feature>
<feature type="binding site" evidence="1">
    <location>
        <position position="178"/>
    </location>
    <ligand>
        <name>Zn(2+)</name>
        <dbReference type="ChEBI" id="CHEBI:29105"/>
    </ligand>
</feature>
<sequence length="259" mass="30097">MYLRKPIQKIKSEVQIRLIRYYTASENAKVTYHEEMQNNFIATNIFQKALLTCGSAVIALLDPHRGDMIACLGEVTGENAIKYMHSKMLQTEEGQDILKNKPRINSKTIAFETLSQMPENSLGRVYADFMKDNNITADSRLPVQFIADPELAYVMQRYREVHDLVHASLFMKTNMLGEVTVKWVEGIQTKLPMCIGGGIWGAARLRPKHRQMYLKYYLPWAIRTGNNAKFLQGIYFEKRWEQDIDDFHKEMNIVRLLKK</sequence>
<proteinExistence type="evidence at transcript level"/>
<reference key="1">
    <citation type="submission" date="2006-03" db="EMBL/GenBank/DDBJ databases">
        <title>Blast silkworm EST database for functional genes.</title>
        <authorList>
            <person name="Niu B.L."/>
            <person name="Meng Z.Q."/>
            <person name="Weng H.B."/>
            <person name="Shen W.F."/>
            <person name="He L.H."/>
            <person name="Zheng K.F."/>
            <person name="Ye S.T."/>
            <person name="Lin T.B."/>
            <person name="Chen J.E."/>
        </authorList>
    </citation>
    <scope>NUCLEOTIDE SEQUENCE [LARGE SCALE MRNA]</scope>
</reference>
<accession>Q1HPV1</accession>
<organism>
    <name type="scientific">Bombyx mori</name>
    <name type="common">Silk moth</name>
    <dbReference type="NCBI Taxonomy" id="7091"/>
    <lineage>
        <taxon>Eukaryota</taxon>
        <taxon>Metazoa</taxon>
        <taxon>Ecdysozoa</taxon>
        <taxon>Arthropoda</taxon>
        <taxon>Hexapoda</taxon>
        <taxon>Insecta</taxon>
        <taxon>Pterygota</taxon>
        <taxon>Neoptera</taxon>
        <taxon>Endopterygota</taxon>
        <taxon>Lepidoptera</taxon>
        <taxon>Glossata</taxon>
        <taxon>Ditrysia</taxon>
        <taxon>Bombycoidea</taxon>
        <taxon>Bombycidae</taxon>
        <taxon>Bombycinae</taxon>
        <taxon>Bombyx</taxon>
    </lineage>
</organism>